<comment type="function">
    <text evidence="2 3 4">Shows trans-enoyl-CoA hydratase/3-hydroxyacyl-CoA dehydratase activity. In vitro, can hydrate (2E)-butenoyl-CoA, (2E)-hexenoyl-CoA and (2E)-decenoyl-CoA.</text>
</comment>
<comment type="catalytic activity">
    <reaction evidence="2 3 4">
        <text>a (3R)-3-hydroxyacyl-CoA = a (2E)-enoyl-CoA + H2O</text>
        <dbReference type="Rhea" id="RHEA:26526"/>
        <dbReference type="ChEBI" id="CHEBI:15377"/>
        <dbReference type="ChEBI" id="CHEBI:57319"/>
        <dbReference type="ChEBI" id="CHEBI:58856"/>
        <dbReference type="EC" id="4.2.1.119"/>
    </reaction>
</comment>
<comment type="catalytic activity">
    <reaction evidence="2 3">
        <text>(3R)-3-hydroxybutanoyl-CoA = (2E)-butenoyl-CoA + H2O</text>
        <dbReference type="Rhea" id="RHEA:17849"/>
        <dbReference type="ChEBI" id="CHEBI:15377"/>
        <dbReference type="ChEBI" id="CHEBI:57315"/>
        <dbReference type="ChEBI" id="CHEBI:57332"/>
        <dbReference type="EC" id="4.2.1.55"/>
    </reaction>
</comment>
<comment type="catalytic activity">
    <reaction evidence="3 4">
        <text>(3R)-hydroxyhexanoyl-CoA = (2E)-hexenoyl-CoA + H2O</text>
        <dbReference type="Rhea" id="RHEA:46720"/>
        <dbReference type="ChEBI" id="CHEBI:15377"/>
        <dbReference type="ChEBI" id="CHEBI:62077"/>
        <dbReference type="ChEBI" id="CHEBI:74280"/>
    </reaction>
</comment>
<comment type="catalytic activity">
    <reaction evidence="3 4">
        <text>(3R)-3-hydroxydecanoyl-CoA = (2E)-decenoyl-CoA + H2O</text>
        <dbReference type="Rhea" id="RHEA:45992"/>
        <dbReference type="ChEBI" id="CHEBI:15377"/>
        <dbReference type="ChEBI" id="CHEBI:61406"/>
        <dbReference type="ChEBI" id="CHEBI:74272"/>
    </reaction>
</comment>
<comment type="biophysicochemical properties">
    <kinetics>
        <KM evidence="2">55 uM for 2-butenoyl-CoA</KM>
        <text evidence="2">kcat is 110 sec(-1) with butenoyl-CoA as substrate.</text>
    </kinetics>
</comment>
<comment type="subunit">
    <text evidence="2">Homodimer.</text>
</comment>
<comment type="similarity">
    <text evidence="6">Belongs to the enoyl-CoA hydratase/isomerase family.</text>
</comment>
<organism>
    <name type="scientific">Mycobacterium tuberculosis (strain ATCC 25618 / H37Rv)</name>
    <dbReference type="NCBI Taxonomy" id="83332"/>
    <lineage>
        <taxon>Bacteria</taxon>
        <taxon>Bacillati</taxon>
        <taxon>Actinomycetota</taxon>
        <taxon>Actinomycetes</taxon>
        <taxon>Mycobacteriales</taxon>
        <taxon>Mycobacteriaceae</taxon>
        <taxon>Mycobacterium</taxon>
        <taxon>Mycobacterium tuberculosis complex</taxon>
    </lineage>
</organism>
<reference key="1">
    <citation type="journal article" date="1998" name="Nature">
        <title>Deciphering the biology of Mycobacterium tuberculosis from the complete genome sequence.</title>
        <authorList>
            <person name="Cole S.T."/>
            <person name="Brosch R."/>
            <person name="Parkhill J."/>
            <person name="Garnier T."/>
            <person name="Churcher C.M."/>
            <person name="Harris D.E."/>
            <person name="Gordon S.V."/>
            <person name="Eiglmeier K."/>
            <person name="Gas S."/>
            <person name="Barry C.E. III"/>
            <person name="Tekaia F."/>
            <person name="Badcock K."/>
            <person name="Basham D."/>
            <person name="Brown D."/>
            <person name="Chillingworth T."/>
            <person name="Connor R."/>
            <person name="Davies R.M."/>
            <person name="Devlin K."/>
            <person name="Feltwell T."/>
            <person name="Gentles S."/>
            <person name="Hamlin N."/>
            <person name="Holroyd S."/>
            <person name="Hornsby T."/>
            <person name="Jagels K."/>
            <person name="Krogh A."/>
            <person name="McLean J."/>
            <person name="Moule S."/>
            <person name="Murphy L.D."/>
            <person name="Oliver S."/>
            <person name="Osborne J."/>
            <person name="Quail M.A."/>
            <person name="Rajandream M.A."/>
            <person name="Rogers J."/>
            <person name="Rutter S."/>
            <person name="Seeger K."/>
            <person name="Skelton S."/>
            <person name="Squares S."/>
            <person name="Squares R."/>
            <person name="Sulston J.E."/>
            <person name="Taylor K."/>
            <person name="Whitehead S."/>
            <person name="Barrell B.G."/>
        </authorList>
    </citation>
    <scope>NUCLEOTIDE SEQUENCE [LARGE SCALE GENOMIC DNA]</scope>
    <source>
        <strain>ATCC 25618 / H37Rv</strain>
    </source>
</reference>
<reference key="2">
    <citation type="journal article" date="2008" name="J. Bacteriol.">
        <title>Identification of a novel mycobacterial 3-hydroxyacyl-thioester dehydratase, HtdZ (Rv0130), by functional complementation in yeast.</title>
        <authorList>
            <person name="Gurvitz A."/>
            <person name="Hiltunen J.K."/>
            <person name="Kastaniotis A.J."/>
        </authorList>
    </citation>
    <scope>FUNCTION</scope>
    <scope>CATALYTIC ACTIVITY</scope>
</reference>
<reference key="3">
    <citation type="journal article" date="2009" name="J. Bacteriol.">
        <title>Heterologous expression of mycobacterial proteins in Saccharomyces cerevisiae reveals two physiologically functional 3-hydroxyacyl-thioester dehydratases, HtdX and HtdY, in addition to HadABC and HtdZ.</title>
        <authorList>
            <person name="Gurvitz A."/>
            <person name="Hiltunen J.K."/>
            <person name="Kastaniotis A.J."/>
        </authorList>
    </citation>
    <scope>FUNCTION</scope>
    <scope>CATALYTIC ACTIVITY</scope>
</reference>
<reference key="4">
    <citation type="journal article" date="2011" name="Mol. Cell. Proteomics">
        <title>Proteogenomic analysis of Mycobacterium tuberculosis by high resolution mass spectrometry.</title>
        <authorList>
            <person name="Kelkar D.S."/>
            <person name="Kumar D."/>
            <person name="Kumar P."/>
            <person name="Balakrishnan L."/>
            <person name="Muthusamy B."/>
            <person name="Yadav A.K."/>
            <person name="Shrivastava P."/>
            <person name="Marimuthu A."/>
            <person name="Anand S."/>
            <person name="Sundaram H."/>
            <person name="Kingsbury R."/>
            <person name="Harsha H.C."/>
            <person name="Nair B."/>
            <person name="Prasad T.S."/>
            <person name="Chauhan D.S."/>
            <person name="Katoch K."/>
            <person name="Katoch V.M."/>
            <person name="Kumar P."/>
            <person name="Chaerkady R."/>
            <person name="Ramachandran S."/>
            <person name="Dash D."/>
            <person name="Pandey A."/>
        </authorList>
    </citation>
    <scope>IDENTIFICATION BY MASS SPECTROMETRY [LARGE SCALE ANALYSIS]</scope>
    <source>
        <strain>ATCC 25618 / H37Rv</strain>
    </source>
</reference>
<reference key="5">
    <citation type="journal article" date="2006" name="Protein Sci.">
        <title>Structure and function of Rv0130, a conserved hypothetical protein from Mycobacterium tuberculosis.</title>
        <authorList>
            <person name="Johansson P."/>
            <person name="Castell A."/>
            <person name="Jones T.A."/>
            <person name="Backbro K."/>
        </authorList>
    </citation>
    <scope>X-RAY CRYSTALLOGRAPHY (1.8 ANGSTROMS)</scope>
    <scope>FUNCTION</scope>
    <scope>CATALYTIC ACTIVITY</scope>
    <scope>BIOPHYSICOCHEMICAL PROPERTIES</scope>
    <scope>SUBUNIT</scope>
    <scope>MUTAGENESIS OF ASP-40 AND HIS-45</scope>
    <source>
        <strain>ATCC 25618 / H37Rv</strain>
    </source>
</reference>
<feature type="chain" id="PRO_0000262761" description="3-hydroxyacyl-thioester dehydratase Z">
    <location>
        <begin position="1"/>
        <end position="151"/>
    </location>
</feature>
<feature type="domain" description="MaoC-like" evidence="1">
    <location>
        <begin position="11"/>
        <end position="131"/>
    </location>
</feature>
<feature type="binding site" evidence="6">
    <location>
        <begin position="60"/>
        <end position="63"/>
    </location>
    <ligand>
        <name>substrate</name>
    </ligand>
</feature>
<feature type="binding site" description="in homodimeric partner" evidence="6">
    <location>
        <begin position="86"/>
        <end position="89"/>
    </location>
    <ligand>
        <name>substrate</name>
    </ligand>
</feature>
<feature type="binding site" evidence="6">
    <location>
        <begin position="97"/>
        <end position="99"/>
    </location>
    <ligand>
        <name>substrate</name>
    </ligand>
</feature>
<feature type="binding site" description="in homodimeric partner" evidence="6">
    <location>
        <position position="124"/>
    </location>
    <ligand>
        <name>substrate</name>
    </ligand>
</feature>
<feature type="binding site" description="in homodimeric partner" evidence="6">
    <location>
        <position position="148"/>
    </location>
    <ligand>
        <name>substrate</name>
    </ligand>
</feature>
<feature type="site" description="Important for catalytic activity" evidence="6">
    <location>
        <position position="40"/>
    </location>
</feature>
<feature type="site" description="Transition state stabilizer" evidence="1">
    <location>
        <position position="42"/>
    </location>
</feature>
<feature type="site" description="Important for catalytic activity" evidence="6">
    <location>
        <position position="45"/>
    </location>
</feature>
<feature type="mutagenesis site" description="27% loss of activity." evidence="2">
    <original>D</original>
    <variation>N</variation>
    <location>
        <position position="40"/>
    </location>
</feature>
<feature type="mutagenesis site" description="Total loss of activity." evidence="2">
    <original>H</original>
    <variation>Q</variation>
    <location>
        <position position="45"/>
    </location>
</feature>
<feature type="strand" evidence="7">
    <location>
        <begin position="3"/>
        <end position="6"/>
    </location>
</feature>
<feature type="helix" evidence="7">
    <location>
        <begin position="7"/>
        <end position="12"/>
    </location>
</feature>
<feature type="turn" evidence="7">
    <location>
        <begin position="13"/>
        <end position="15"/>
    </location>
</feature>
<feature type="strand" evidence="7">
    <location>
        <begin position="16"/>
        <end position="20"/>
    </location>
</feature>
<feature type="helix" evidence="7">
    <location>
        <begin position="28"/>
        <end position="38"/>
    </location>
</feature>
<feature type="helix" evidence="7">
    <location>
        <begin position="43"/>
        <end position="46"/>
    </location>
</feature>
<feature type="helix" evidence="7">
    <location>
        <begin position="48"/>
        <end position="52"/>
    </location>
</feature>
<feature type="helix" evidence="7">
    <location>
        <begin position="63"/>
        <end position="68"/>
    </location>
</feature>
<feature type="helix" evidence="7">
    <location>
        <begin position="70"/>
        <end position="75"/>
    </location>
</feature>
<feature type="strand" evidence="7">
    <location>
        <begin position="79"/>
        <end position="82"/>
    </location>
</feature>
<feature type="strand" evidence="7">
    <location>
        <begin position="84"/>
        <end position="95"/>
    </location>
</feature>
<feature type="strand" evidence="7">
    <location>
        <begin position="105"/>
        <end position="119"/>
    </location>
</feature>
<feature type="strand" evidence="7">
    <location>
        <begin position="122"/>
        <end position="133"/>
    </location>
</feature>
<feature type="strand" evidence="7">
    <location>
        <begin position="140"/>
        <end position="150"/>
    </location>
</feature>
<proteinExistence type="evidence at protein level"/>
<dbReference type="EC" id="4.2.1.-" evidence="2 3 4"/>
<dbReference type="EC" id="4.2.1.55" evidence="2"/>
<dbReference type="EC" id="4.2.1.119" evidence="2 3 4"/>
<dbReference type="EMBL" id="AL123456">
    <property type="protein sequence ID" value="CCP42855.1"/>
    <property type="molecule type" value="Genomic_DNA"/>
</dbReference>
<dbReference type="PIR" id="E70615">
    <property type="entry name" value="E70615"/>
</dbReference>
<dbReference type="RefSeq" id="NP_214644.1">
    <property type="nucleotide sequence ID" value="NC_000962.3"/>
</dbReference>
<dbReference type="RefSeq" id="WP_003400912.1">
    <property type="nucleotide sequence ID" value="NZ_NVQJ01000001.1"/>
</dbReference>
<dbReference type="PDB" id="2C2I">
    <property type="method" value="X-ray"/>
    <property type="resolution" value="1.80 A"/>
    <property type="chains" value="A/B=1-151"/>
</dbReference>
<dbReference type="PDBsum" id="2C2I"/>
<dbReference type="SMR" id="P9WNP3"/>
<dbReference type="STRING" id="83332.Rv0130"/>
<dbReference type="SwissLipids" id="SLP:000001286"/>
<dbReference type="PaxDb" id="83332-Rv0130"/>
<dbReference type="GeneID" id="45424096"/>
<dbReference type="GeneID" id="886876"/>
<dbReference type="KEGG" id="mtu:Rv0130"/>
<dbReference type="KEGG" id="mtv:RVBD_0130"/>
<dbReference type="TubercuList" id="Rv0130"/>
<dbReference type="eggNOG" id="COG2030">
    <property type="taxonomic scope" value="Bacteria"/>
</dbReference>
<dbReference type="InParanoid" id="P9WNP3"/>
<dbReference type="OrthoDB" id="9801735at2"/>
<dbReference type="PhylomeDB" id="P9WNP3"/>
<dbReference type="SABIO-RK" id="P9WNP3"/>
<dbReference type="EvolutionaryTrace" id="P9WNP3"/>
<dbReference type="Proteomes" id="UP000001584">
    <property type="component" value="Chromosome"/>
</dbReference>
<dbReference type="GO" id="GO:0018812">
    <property type="term" value="F:3-hydroxyacyl-CoA dehydratase activity"/>
    <property type="evidence" value="ECO:0000314"/>
    <property type="project" value="MTBBASE"/>
</dbReference>
<dbReference type="GO" id="GO:0004300">
    <property type="term" value="F:enoyl-CoA hydratase activity"/>
    <property type="evidence" value="ECO:0000314"/>
    <property type="project" value="MTBBASE"/>
</dbReference>
<dbReference type="GO" id="GO:0006633">
    <property type="term" value="P:fatty acid biosynthetic process"/>
    <property type="evidence" value="ECO:0000315"/>
    <property type="project" value="MTBBASE"/>
</dbReference>
<dbReference type="CDD" id="cd03450">
    <property type="entry name" value="NodN"/>
    <property type="match status" value="1"/>
</dbReference>
<dbReference type="FunFam" id="3.10.129.10:FF:000053">
    <property type="entry name" value="Probable enoyl-CoA hydratase 1"/>
    <property type="match status" value="1"/>
</dbReference>
<dbReference type="Gene3D" id="3.10.129.10">
    <property type="entry name" value="Hotdog Thioesterase"/>
    <property type="match status" value="1"/>
</dbReference>
<dbReference type="InterPro" id="IPR029069">
    <property type="entry name" value="HotDog_dom_sf"/>
</dbReference>
<dbReference type="InterPro" id="IPR002539">
    <property type="entry name" value="MaoC-like_dom"/>
</dbReference>
<dbReference type="InterPro" id="IPR039375">
    <property type="entry name" value="NodN-like"/>
</dbReference>
<dbReference type="PANTHER" id="PTHR42993">
    <property type="entry name" value="MAOC-LIKE DEHYDRATASE DOMAIN-CONTAINING PROTEIN"/>
    <property type="match status" value="1"/>
</dbReference>
<dbReference type="PANTHER" id="PTHR42993:SF1">
    <property type="entry name" value="MAOC-LIKE DEHYDRATASE DOMAIN-CONTAINING PROTEIN"/>
    <property type="match status" value="1"/>
</dbReference>
<dbReference type="Pfam" id="PF01575">
    <property type="entry name" value="MaoC_dehydratas"/>
    <property type="match status" value="1"/>
</dbReference>
<dbReference type="SUPFAM" id="SSF54637">
    <property type="entry name" value="Thioesterase/thiol ester dehydrase-isomerase"/>
    <property type="match status" value="1"/>
</dbReference>
<accession>P9WNP3</accession>
<accession>L0T2P7</accession>
<accession>P96807</accession>
<accession>Q7DAF4</accession>
<evidence type="ECO:0000255" key="1"/>
<evidence type="ECO:0000269" key="2">
    <source>
    </source>
</evidence>
<evidence type="ECO:0000269" key="3">
    <source>
    </source>
</evidence>
<evidence type="ECO:0000269" key="4">
    <source>
    </source>
</evidence>
<evidence type="ECO:0000303" key="5">
    <source>
    </source>
</evidence>
<evidence type="ECO:0000305" key="6"/>
<evidence type="ECO:0007829" key="7">
    <source>
        <dbReference type="PDB" id="2C2I"/>
    </source>
</evidence>
<gene>
    <name evidence="5" type="primary">htdZ</name>
    <name type="ordered locus">Rv0130</name>
</gene>
<name>HTDZ_MYCTU</name>
<sequence>MRTFESVADLAAAAGEKVGQSDWVTITQEEVNLFADATGDHQWIHVDPERAAAGPFGTTIAHGFMTLALLPRLQHQMYTVKGVKLAINYGLNKVRFPAPVPVGSRVRATSSLVGVEDLGNGTVQATVSTTVEVEGSAKPACVAESIVRYVA</sequence>
<protein>
    <recommendedName>
        <fullName evidence="5">3-hydroxyacyl-thioester dehydratase Z</fullName>
        <ecNumber evidence="2 3 4">4.2.1.-</ecNumber>
    </recommendedName>
    <alternativeName>
        <fullName evidence="6">3-hydroxybutyryl-CoA dehydratase</fullName>
        <ecNumber evidence="2">4.2.1.55</ecNumber>
    </alternativeName>
    <alternativeName>
        <fullName evidence="6">Enoyl-CoA hydratase 2</fullName>
        <ecNumber evidence="2 3 4">4.2.1.119</ecNumber>
    </alternativeName>
    <alternativeName>
        <fullName>N-related protein</fullName>
    </alternativeName>
    <alternativeName>
        <fullName>Nodulation protein</fullName>
    </alternativeName>
</protein>
<keyword id="KW-0002">3D-structure</keyword>
<keyword id="KW-0276">Fatty acid metabolism</keyword>
<keyword id="KW-0443">Lipid metabolism</keyword>
<keyword id="KW-0456">Lyase</keyword>
<keyword id="KW-1185">Reference proteome</keyword>